<dbReference type="EMBL" id="AY487248">
    <property type="protein sequence ID" value="AAS17752.1"/>
    <property type="molecule type" value="mRNA"/>
</dbReference>
<dbReference type="EMBL" id="AL591394">
    <property type="status" value="NOT_ANNOTATED_CDS"/>
    <property type="molecule type" value="Genomic_DNA"/>
</dbReference>
<dbReference type="EMBL" id="AL022578">
    <property type="status" value="NOT_ANNOTATED_CDS"/>
    <property type="molecule type" value="Genomic_DNA"/>
</dbReference>
<dbReference type="EMBL" id="Z98304">
    <property type="status" value="NOT_ANNOTATED_CDS"/>
    <property type="molecule type" value="Genomic_DNA"/>
</dbReference>
<dbReference type="EMBL" id="X68011">
    <property type="protein sequence ID" value="CAA48148.1"/>
    <property type="molecule type" value="Genomic_DNA"/>
</dbReference>
<dbReference type="CCDS" id="CCDS43933.1"/>
<dbReference type="PIR" id="S60520">
    <property type="entry name" value="S60520"/>
</dbReference>
<dbReference type="RefSeq" id="NP_001365081.1">
    <property type="nucleotide sequence ID" value="NM_001378152.1"/>
</dbReference>
<dbReference type="RefSeq" id="NP_001365082.1">
    <property type="nucleotide sequence ID" value="NM_001378153.1"/>
</dbReference>
<dbReference type="RefSeq" id="NP_009068.2">
    <property type="nucleotide sequence ID" value="NM_007137.5"/>
</dbReference>
<dbReference type="RefSeq" id="XP_005272657.1">
    <property type="nucleotide sequence ID" value="XM_005272600.3"/>
</dbReference>
<dbReference type="RefSeq" id="XP_011542201.1">
    <property type="nucleotide sequence ID" value="XM_011543899.2"/>
</dbReference>
<dbReference type="RefSeq" id="XP_011542202.1">
    <property type="nucleotide sequence ID" value="XM_011543900.2"/>
</dbReference>
<dbReference type="RefSeq" id="XP_016884975.1">
    <property type="nucleotide sequence ID" value="XM_017029486.1"/>
</dbReference>
<dbReference type="RefSeq" id="XP_016884976.1">
    <property type="nucleotide sequence ID" value="XM_017029487.1"/>
</dbReference>
<dbReference type="SMR" id="P51508"/>
<dbReference type="BioGRID" id="131424">
    <property type="interactions" value="7"/>
</dbReference>
<dbReference type="FunCoup" id="P51508">
    <property type="interactions" value="73"/>
</dbReference>
<dbReference type="IntAct" id="P51508">
    <property type="interactions" value="3"/>
</dbReference>
<dbReference type="STRING" id="9606.ENSP00000366153"/>
<dbReference type="GlyGen" id="P51508">
    <property type="glycosylation" value="1 site, 1 O-linked glycan (1 site)"/>
</dbReference>
<dbReference type="iPTMnet" id="P51508"/>
<dbReference type="PhosphoSitePlus" id="P51508"/>
<dbReference type="BioMuta" id="ZNF81"/>
<dbReference type="DMDM" id="55977803"/>
<dbReference type="jPOST" id="P51508"/>
<dbReference type="MassIVE" id="P51508"/>
<dbReference type="PaxDb" id="9606-ENSP00000366153"/>
<dbReference type="PeptideAtlas" id="P51508"/>
<dbReference type="ProteomicsDB" id="56311"/>
<dbReference type="Antibodypedia" id="5409">
    <property type="antibodies" value="149 antibodies from 21 providers"/>
</dbReference>
<dbReference type="DNASU" id="347344"/>
<dbReference type="Ensembl" id="ENST00000338637.13">
    <property type="protein sequence ID" value="ENSP00000341151.7"/>
    <property type="gene ID" value="ENSG00000197779.15"/>
</dbReference>
<dbReference type="Ensembl" id="ENST00000376954.6">
    <property type="protein sequence ID" value="ENSP00000366153.1"/>
    <property type="gene ID" value="ENSG00000197779.15"/>
</dbReference>
<dbReference type="GeneID" id="347344"/>
<dbReference type="KEGG" id="hsa:347344"/>
<dbReference type="MANE-Select" id="ENST00000338637.13">
    <property type="protein sequence ID" value="ENSP00000341151.7"/>
    <property type="RefSeq nucleotide sequence ID" value="NM_007137.5"/>
    <property type="RefSeq protein sequence ID" value="NP_009068.2"/>
</dbReference>
<dbReference type="UCSC" id="uc010nhy.3">
    <property type="organism name" value="human"/>
</dbReference>
<dbReference type="AGR" id="HGNC:13156"/>
<dbReference type="CTD" id="347344"/>
<dbReference type="DisGeNET" id="347344"/>
<dbReference type="GeneCards" id="ZNF81"/>
<dbReference type="HGNC" id="HGNC:13156">
    <property type="gene designation" value="ZNF81"/>
</dbReference>
<dbReference type="HPA" id="ENSG00000197779">
    <property type="expression patterns" value="Low tissue specificity"/>
</dbReference>
<dbReference type="MalaCards" id="ZNF81"/>
<dbReference type="MIM" id="314998">
    <property type="type" value="gene"/>
</dbReference>
<dbReference type="neXtProt" id="NX_P51508"/>
<dbReference type="OpenTargets" id="ENSG00000197779"/>
<dbReference type="Orphanet" id="777">
    <property type="disease" value="X-linked non-syndromic intellectual disability"/>
</dbReference>
<dbReference type="PharmGKB" id="PA37730"/>
<dbReference type="VEuPathDB" id="HostDB:ENSG00000197779"/>
<dbReference type="eggNOG" id="KOG1721">
    <property type="taxonomic scope" value="Eukaryota"/>
</dbReference>
<dbReference type="GeneTree" id="ENSGT00940000162553"/>
<dbReference type="HOGENOM" id="CLU_002678_17_1_1"/>
<dbReference type="InParanoid" id="P51508"/>
<dbReference type="OMA" id="YTNHENT"/>
<dbReference type="OrthoDB" id="4748970at2759"/>
<dbReference type="PAN-GO" id="P51508">
    <property type="GO annotations" value="4 GO annotations based on evolutionary models"/>
</dbReference>
<dbReference type="PhylomeDB" id="P51508"/>
<dbReference type="TreeFam" id="TF350810"/>
<dbReference type="PathwayCommons" id="P51508"/>
<dbReference type="SignaLink" id="P51508"/>
<dbReference type="BioGRID-ORCS" id="347344">
    <property type="hits" value="3 hits in 789 CRISPR screens"/>
</dbReference>
<dbReference type="ChiTaRS" id="ZNF81">
    <property type="organism name" value="human"/>
</dbReference>
<dbReference type="GenomeRNAi" id="347344"/>
<dbReference type="Pharos" id="P51508">
    <property type="development level" value="Tbio"/>
</dbReference>
<dbReference type="PRO" id="PR:P51508"/>
<dbReference type="Proteomes" id="UP000005640">
    <property type="component" value="Chromosome X"/>
</dbReference>
<dbReference type="RNAct" id="P51508">
    <property type="molecule type" value="protein"/>
</dbReference>
<dbReference type="Bgee" id="ENSG00000197779">
    <property type="expression patterns" value="Expressed in colonic epithelium and 166 other cell types or tissues"/>
</dbReference>
<dbReference type="ExpressionAtlas" id="P51508">
    <property type="expression patterns" value="baseline and differential"/>
</dbReference>
<dbReference type="GO" id="GO:0005634">
    <property type="term" value="C:nucleus"/>
    <property type="evidence" value="ECO:0000318"/>
    <property type="project" value="GO_Central"/>
</dbReference>
<dbReference type="GO" id="GO:0000981">
    <property type="term" value="F:DNA-binding transcription factor activity, RNA polymerase II-specific"/>
    <property type="evidence" value="ECO:0000318"/>
    <property type="project" value="GO_Central"/>
</dbReference>
<dbReference type="GO" id="GO:0000978">
    <property type="term" value="F:RNA polymerase II cis-regulatory region sequence-specific DNA binding"/>
    <property type="evidence" value="ECO:0000318"/>
    <property type="project" value="GO_Central"/>
</dbReference>
<dbReference type="GO" id="GO:0008270">
    <property type="term" value="F:zinc ion binding"/>
    <property type="evidence" value="ECO:0007669"/>
    <property type="project" value="UniProtKB-KW"/>
</dbReference>
<dbReference type="GO" id="GO:0006357">
    <property type="term" value="P:regulation of transcription by RNA polymerase II"/>
    <property type="evidence" value="ECO:0000318"/>
    <property type="project" value="GO_Central"/>
</dbReference>
<dbReference type="CDD" id="cd07765">
    <property type="entry name" value="KRAB_A-box"/>
    <property type="match status" value="1"/>
</dbReference>
<dbReference type="FunFam" id="3.30.160.60:FF:002133">
    <property type="entry name" value="Zinc finger protein 175"/>
    <property type="match status" value="1"/>
</dbReference>
<dbReference type="FunFam" id="3.30.160.60:FF:000295">
    <property type="entry name" value="zinc finger protein 19"/>
    <property type="match status" value="2"/>
</dbReference>
<dbReference type="FunFam" id="3.30.160.60:FF:000380">
    <property type="entry name" value="zinc finger protein 2 isoform X2"/>
    <property type="match status" value="1"/>
</dbReference>
<dbReference type="FunFam" id="3.30.160.60:FF:000358">
    <property type="entry name" value="zinc finger protein 24"/>
    <property type="match status" value="1"/>
</dbReference>
<dbReference type="FunFam" id="3.30.160.60:FF:002343">
    <property type="entry name" value="Zinc finger protein 33A"/>
    <property type="match status" value="1"/>
</dbReference>
<dbReference type="FunFam" id="3.30.160.60:FF:001532">
    <property type="entry name" value="Zinc finger protein 483"/>
    <property type="match status" value="1"/>
</dbReference>
<dbReference type="FunFam" id="3.30.160.60:FF:000268">
    <property type="entry name" value="zinc finger protein 484 isoform X2"/>
    <property type="match status" value="3"/>
</dbReference>
<dbReference type="FunFam" id="3.30.160.60:FF:000754">
    <property type="entry name" value="Zinc finger protein 585A"/>
    <property type="match status" value="1"/>
</dbReference>
<dbReference type="FunFam" id="3.30.160.60:FF:001396">
    <property type="entry name" value="Zinc finger protein 585A"/>
    <property type="match status" value="1"/>
</dbReference>
<dbReference type="Gene3D" id="6.10.140.140">
    <property type="match status" value="1"/>
</dbReference>
<dbReference type="Gene3D" id="3.30.160.60">
    <property type="entry name" value="Classic Zinc Finger"/>
    <property type="match status" value="13"/>
</dbReference>
<dbReference type="InterPro" id="IPR001909">
    <property type="entry name" value="KRAB"/>
</dbReference>
<dbReference type="InterPro" id="IPR036051">
    <property type="entry name" value="KRAB_dom_sf"/>
</dbReference>
<dbReference type="InterPro" id="IPR036236">
    <property type="entry name" value="Znf_C2H2_sf"/>
</dbReference>
<dbReference type="InterPro" id="IPR013087">
    <property type="entry name" value="Znf_C2H2_type"/>
</dbReference>
<dbReference type="PANTHER" id="PTHR14003">
    <property type="entry name" value="TRANSCRIPTIONAL REPRESSOR PROTEIN YY"/>
    <property type="match status" value="1"/>
</dbReference>
<dbReference type="PANTHER" id="PTHR14003:SF23">
    <property type="entry name" value="ZINC FINGER PROTEIN 143"/>
    <property type="match status" value="1"/>
</dbReference>
<dbReference type="Pfam" id="PF01352">
    <property type="entry name" value="KRAB"/>
    <property type="match status" value="1"/>
</dbReference>
<dbReference type="Pfam" id="PF00096">
    <property type="entry name" value="zf-C2H2"/>
    <property type="match status" value="12"/>
</dbReference>
<dbReference type="SMART" id="SM00349">
    <property type="entry name" value="KRAB"/>
    <property type="match status" value="1"/>
</dbReference>
<dbReference type="SMART" id="SM00355">
    <property type="entry name" value="ZnF_C2H2"/>
    <property type="match status" value="12"/>
</dbReference>
<dbReference type="SUPFAM" id="SSF57667">
    <property type="entry name" value="beta-beta-alpha zinc fingers"/>
    <property type="match status" value="8"/>
</dbReference>
<dbReference type="SUPFAM" id="SSF109640">
    <property type="entry name" value="KRAB domain (Kruppel-associated box)"/>
    <property type="match status" value="1"/>
</dbReference>
<dbReference type="PROSITE" id="PS50805">
    <property type="entry name" value="KRAB"/>
    <property type="match status" value="1"/>
</dbReference>
<dbReference type="PROSITE" id="PS00028">
    <property type="entry name" value="ZINC_FINGER_C2H2_1"/>
    <property type="match status" value="12"/>
</dbReference>
<dbReference type="PROSITE" id="PS50157">
    <property type="entry name" value="ZINC_FINGER_C2H2_2"/>
    <property type="match status" value="13"/>
</dbReference>
<feature type="chain" id="PRO_0000047395" description="Zinc finger protein 81">
    <location>
        <begin position="1"/>
        <end position="661"/>
    </location>
</feature>
<feature type="domain" description="KRAB" evidence="2">
    <location>
        <begin position="21"/>
        <end position="92"/>
    </location>
</feature>
<feature type="zinc finger region" description="C2H2-type 1" evidence="1">
    <location>
        <begin position="330"/>
        <end position="352"/>
    </location>
</feature>
<feature type="zinc finger region" description="C2H2-type 2" evidence="1">
    <location>
        <begin position="358"/>
        <end position="380"/>
    </location>
</feature>
<feature type="zinc finger region" description="C2H2-type 3" evidence="1">
    <location>
        <begin position="386"/>
        <end position="408"/>
    </location>
</feature>
<feature type="zinc finger region" description="C2H2-type 4" evidence="1">
    <location>
        <begin position="414"/>
        <end position="436"/>
    </location>
</feature>
<feature type="zinc finger region" description="C2H2-type 5" evidence="1">
    <location>
        <begin position="442"/>
        <end position="464"/>
    </location>
</feature>
<feature type="zinc finger region" description="C2H2-type 6" evidence="1">
    <location>
        <begin position="470"/>
        <end position="492"/>
    </location>
</feature>
<feature type="zinc finger region" description="C2H2-type 7" evidence="1">
    <location>
        <begin position="498"/>
        <end position="520"/>
    </location>
</feature>
<feature type="zinc finger region" description="C2H2-type 8" evidence="1">
    <location>
        <begin position="526"/>
        <end position="548"/>
    </location>
</feature>
<feature type="zinc finger region" description="C2H2-type 9" evidence="1">
    <location>
        <begin position="554"/>
        <end position="576"/>
    </location>
</feature>
<feature type="zinc finger region" description="C2H2-type 10" evidence="1">
    <location>
        <begin position="582"/>
        <end position="604"/>
    </location>
</feature>
<feature type="zinc finger region" description="C2H2-type 11" evidence="1">
    <location>
        <begin position="610"/>
        <end position="632"/>
    </location>
</feature>
<feature type="zinc finger region" description="C2H2-type 12" evidence="1">
    <location>
        <begin position="638"/>
        <end position="660"/>
    </location>
</feature>
<feature type="cross-link" description="Glycyl lysine isopeptide (Lys-Gly) (interchain with G-Cter in SUMO2)" evidence="5">
    <location>
        <position position="266"/>
    </location>
</feature>
<feature type="sequence variant" id="VAR_019939" description="In dbSNP:rs183846665." evidence="3">
    <original>A</original>
    <variation>V</variation>
    <location>
        <position position="3"/>
    </location>
</feature>
<feature type="sequence variant" id="VAR_038806" description="In dbSNP:rs17147793.">
    <original>G</original>
    <variation>V</variation>
    <location>
        <position position="117"/>
    </location>
</feature>
<feature type="sequence variant" id="VAR_019940" description="In dbSNP:rs41312157." evidence="3">
    <original>N</original>
    <variation>S</variation>
    <location>
        <position position="157"/>
    </location>
</feature>
<feature type="sequence variant" id="VAR_019941" description="Found in a family with intellectual disability; uncertain significance; dbSNP:rs28933691." evidence="3">
    <original>S</original>
    <variation>N</variation>
    <location>
        <position position="179"/>
    </location>
</feature>
<feature type="sequence variant" id="VAR_019942" description="In dbSNP:rs186251256." evidence="3">
    <original>S</original>
    <variation>L</variation>
    <location>
        <position position="185"/>
    </location>
</feature>
<feature type="sequence variant" id="VAR_052765" description="In dbSNP:rs537825.">
    <original>A</original>
    <variation>E</variation>
    <location>
        <position position="213"/>
    </location>
</feature>
<feature type="sequence variant" id="VAR_019943" description="In dbSNP:rs182239885." evidence="3">
    <original>I</original>
    <variation>V</variation>
    <location>
        <position position="499"/>
    </location>
</feature>
<organism>
    <name type="scientific">Homo sapiens</name>
    <name type="common">Human</name>
    <dbReference type="NCBI Taxonomy" id="9606"/>
    <lineage>
        <taxon>Eukaryota</taxon>
        <taxon>Metazoa</taxon>
        <taxon>Chordata</taxon>
        <taxon>Craniata</taxon>
        <taxon>Vertebrata</taxon>
        <taxon>Euteleostomi</taxon>
        <taxon>Mammalia</taxon>
        <taxon>Eutheria</taxon>
        <taxon>Euarchontoglires</taxon>
        <taxon>Primates</taxon>
        <taxon>Haplorrhini</taxon>
        <taxon>Catarrhini</taxon>
        <taxon>Hominidae</taxon>
        <taxon>Homo</taxon>
    </lineage>
</organism>
<evidence type="ECO:0000255" key="1">
    <source>
        <dbReference type="PROSITE-ProRule" id="PRU00042"/>
    </source>
</evidence>
<evidence type="ECO:0000255" key="2">
    <source>
        <dbReference type="PROSITE-ProRule" id="PRU00119"/>
    </source>
</evidence>
<evidence type="ECO:0000269" key="3">
    <source>
    </source>
</evidence>
<evidence type="ECO:0000305" key="4"/>
<evidence type="ECO:0007744" key="5">
    <source>
    </source>
</evidence>
<comment type="function">
    <text>May be involved in transcriptional regulation.</text>
</comment>
<comment type="subcellular location">
    <subcellularLocation>
        <location evidence="4">Nucleus</location>
    </subcellularLocation>
</comment>
<comment type="disease">
    <text evidence="3">A chromosomal aberration involving ZNF81 is found in a severe intellectual disability patient. Translocation t(X;9)(p11.23;q34.3).</text>
</comment>
<comment type="similarity">
    <text evidence="4">Belongs to the krueppel C2H2-type zinc-finger protein family.</text>
</comment>
<accession>P51508</accession>
<accession>Q6RX22</accession>
<accession>Q96QH6</accession>
<proteinExistence type="evidence at protein level"/>
<keyword id="KW-0160">Chromosomal rearrangement</keyword>
<keyword id="KW-0238">DNA-binding</keyword>
<keyword id="KW-1017">Isopeptide bond</keyword>
<keyword id="KW-0479">Metal-binding</keyword>
<keyword id="KW-0539">Nucleus</keyword>
<keyword id="KW-1267">Proteomics identification</keyword>
<keyword id="KW-1185">Reference proteome</keyword>
<keyword id="KW-0677">Repeat</keyword>
<keyword id="KW-0804">Transcription</keyword>
<keyword id="KW-0805">Transcription regulation</keyword>
<keyword id="KW-0832">Ubl conjugation</keyword>
<keyword id="KW-0862">Zinc</keyword>
<keyword id="KW-0863">Zinc-finger</keyword>
<protein>
    <recommendedName>
        <fullName>Zinc finger protein 81</fullName>
    </recommendedName>
    <alternativeName>
        <fullName>HFZ20</fullName>
    </alternativeName>
</protein>
<gene>
    <name type="primary">ZNF81</name>
</gene>
<sequence length="661" mass="75960">MPANEDAPQPGEHGSACEVSVSFEDVTVDFSREEWQQLDSTQRRLYQDVMLENYSHLLSVGFEVPKPEVIFKLEQGEGPWTLEGEAPHQSCSDGKFGIKPSQRRISGKSTFHSEMEGEDTRDDSLYSILEELWQDAEQIKRCQEKHNKLLSRTTFLNKKILNTEWDYEYKDFGKFVHPSPNLILSQKRPHKRDSFGKSFKHNLDLHIHNKSNAAKNLDKTIGHGQVFTQNSSYSHHENTHTGVKFCERNQCGKVLSLKHSLSQNVKFPIGEKANTCTEFGKIFTQRSHFFAPQKIHTVEKPHELSKCVNVFTQKPLLSIYLRVHRDEKLYICTKCGKAFIQNSELIMHEKTHTREKPYKCNECGKSFFQVSSLLRHQTTHTGEKLFECSECGKGFSLNSALNIHQKIHTGERHHKCSECGKAFTQKSTLRMHQRIHTGERSYICTQCGQAFIQKAHLIAHQRIHTGEKPYECSDCGKSFPSKSQLQMHKRIHTGEKPYICTECGKAFTNRSNLNTHQKSHTGEKSYICAECGKAFTDRSNFNKHQTIHTGEKPYVCADCGRAFIQKSELITHQRIHTTEKPYKCPDCEKSFSKKPHLKVHQRIHTGEKPYICAECGKAFTDRSNFNKHQTIHTGDKPYKCSDCGKGFTQKSVLSMHRNIHT</sequence>
<reference key="1">
    <citation type="journal article" date="2004" name="J. Med. Genet.">
        <title>Zinc finger 81 (ZNF81) mutations associated with X-linked mental retardation.</title>
        <authorList>
            <person name="Kleefstra T."/>
            <person name="Yntema H.G."/>
            <person name="Oudakker A.R."/>
            <person name="Banning M.J.G."/>
            <person name="Kalscheuer V.M."/>
            <person name="Chelly J."/>
            <person name="Moraine C."/>
            <person name="Ropers H.-H."/>
            <person name="Fryns J.-P."/>
            <person name="Janssen I.M."/>
            <person name="Sistermans E.A."/>
            <person name="Nillesen W.N."/>
            <person name="de Vries L.B.A."/>
            <person name="Hamel B.C.J."/>
            <person name="van Bokhoven H."/>
        </authorList>
    </citation>
    <scope>NUCLEOTIDE SEQUENCE [MRNA]</scope>
    <scope>VARIANTS VAL-3; SER-157; ASN-179; LEU-185 AND VAL-499</scope>
    <scope>CHROMOSOMAL TRANSLOCATION</scope>
</reference>
<reference key="2">
    <citation type="journal article" date="2005" name="Nature">
        <title>The DNA sequence of the human X chromosome.</title>
        <authorList>
            <person name="Ross M.T."/>
            <person name="Grafham D.V."/>
            <person name="Coffey A.J."/>
            <person name="Scherer S."/>
            <person name="McLay K."/>
            <person name="Muzny D."/>
            <person name="Platzer M."/>
            <person name="Howell G.R."/>
            <person name="Burrows C."/>
            <person name="Bird C.P."/>
            <person name="Frankish A."/>
            <person name="Lovell F.L."/>
            <person name="Howe K.L."/>
            <person name="Ashurst J.L."/>
            <person name="Fulton R.S."/>
            <person name="Sudbrak R."/>
            <person name="Wen G."/>
            <person name="Jones M.C."/>
            <person name="Hurles M.E."/>
            <person name="Andrews T.D."/>
            <person name="Scott C.E."/>
            <person name="Searle S."/>
            <person name="Ramser J."/>
            <person name="Whittaker A."/>
            <person name="Deadman R."/>
            <person name="Carter N.P."/>
            <person name="Hunt S.E."/>
            <person name="Chen R."/>
            <person name="Cree A."/>
            <person name="Gunaratne P."/>
            <person name="Havlak P."/>
            <person name="Hodgson A."/>
            <person name="Metzker M.L."/>
            <person name="Richards S."/>
            <person name="Scott G."/>
            <person name="Steffen D."/>
            <person name="Sodergren E."/>
            <person name="Wheeler D.A."/>
            <person name="Worley K.C."/>
            <person name="Ainscough R."/>
            <person name="Ambrose K.D."/>
            <person name="Ansari-Lari M.A."/>
            <person name="Aradhya S."/>
            <person name="Ashwell R.I."/>
            <person name="Babbage A.K."/>
            <person name="Bagguley C.L."/>
            <person name="Ballabio A."/>
            <person name="Banerjee R."/>
            <person name="Barker G.E."/>
            <person name="Barlow K.F."/>
            <person name="Barrett I.P."/>
            <person name="Bates K.N."/>
            <person name="Beare D.M."/>
            <person name="Beasley H."/>
            <person name="Beasley O."/>
            <person name="Beck A."/>
            <person name="Bethel G."/>
            <person name="Blechschmidt K."/>
            <person name="Brady N."/>
            <person name="Bray-Allen S."/>
            <person name="Bridgeman A.M."/>
            <person name="Brown A.J."/>
            <person name="Brown M.J."/>
            <person name="Bonnin D."/>
            <person name="Bruford E.A."/>
            <person name="Buhay C."/>
            <person name="Burch P."/>
            <person name="Burford D."/>
            <person name="Burgess J."/>
            <person name="Burrill W."/>
            <person name="Burton J."/>
            <person name="Bye J.M."/>
            <person name="Carder C."/>
            <person name="Carrel L."/>
            <person name="Chako J."/>
            <person name="Chapman J.C."/>
            <person name="Chavez D."/>
            <person name="Chen E."/>
            <person name="Chen G."/>
            <person name="Chen Y."/>
            <person name="Chen Z."/>
            <person name="Chinault C."/>
            <person name="Ciccodicola A."/>
            <person name="Clark S.Y."/>
            <person name="Clarke G."/>
            <person name="Clee C.M."/>
            <person name="Clegg S."/>
            <person name="Clerc-Blankenburg K."/>
            <person name="Clifford K."/>
            <person name="Cobley V."/>
            <person name="Cole C.G."/>
            <person name="Conquer J.S."/>
            <person name="Corby N."/>
            <person name="Connor R.E."/>
            <person name="David R."/>
            <person name="Davies J."/>
            <person name="Davis C."/>
            <person name="Davis J."/>
            <person name="Delgado O."/>
            <person name="Deshazo D."/>
            <person name="Dhami P."/>
            <person name="Ding Y."/>
            <person name="Dinh H."/>
            <person name="Dodsworth S."/>
            <person name="Draper H."/>
            <person name="Dugan-Rocha S."/>
            <person name="Dunham A."/>
            <person name="Dunn M."/>
            <person name="Durbin K.J."/>
            <person name="Dutta I."/>
            <person name="Eades T."/>
            <person name="Ellwood M."/>
            <person name="Emery-Cohen A."/>
            <person name="Errington H."/>
            <person name="Evans K.L."/>
            <person name="Faulkner L."/>
            <person name="Francis F."/>
            <person name="Frankland J."/>
            <person name="Fraser A.E."/>
            <person name="Galgoczy P."/>
            <person name="Gilbert J."/>
            <person name="Gill R."/>
            <person name="Gloeckner G."/>
            <person name="Gregory S.G."/>
            <person name="Gribble S."/>
            <person name="Griffiths C."/>
            <person name="Grocock R."/>
            <person name="Gu Y."/>
            <person name="Gwilliam R."/>
            <person name="Hamilton C."/>
            <person name="Hart E.A."/>
            <person name="Hawes A."/>
            <person name="Heath P.D."/>
            <person name="Heitmann K."/>
            <person name="Hennig S."/>
            <person name="Hernandez J."/>
            <person name="Hinzmann B."/>
            <person name="Ho S."/>
            <person name="Hoffs M."/>
            <person name="Howden P.J."/>
            <person name="Huckle E.J."/>
            <person name="Hume J."/>
            <person name="Hunt P.J."/>
            <person name="Hunt A.R."/>
            <person name="Isherwood J."/>
            <person name="Jacob L."/>
            <person name="Johnson D."/>
            <person name="Jones S."/>
            <person name="de Jong P.J."/>
            <person name="Joseph S.S."/>
            <person name="Keenan S."/>
            <person name="Kelly S."/>
            <person name="Kershaw J.K."/>
            <person name="Khan Z."/>
            <person name="Kioschis P."/>
            <person name="Klages S."/>
            <person name="Knights A.J."/>
            <person name="Kosiura A."/>
            <person name="Kovar-Smith C."/>
            <person name="Laird G.K."/>
            <person name="Langford C."/>
            <person name="Lawlor S."/>
            <person name="Leversha M."/>
            <person name="Lewis L."/>
            <person name="Liu W."/>
            <person name="Lloyd C."/>
            <person name="Lloyd D.M."/>
            <person name="Loulseged H."/>
            <person name="Loveland J.E."/>
            <person name="Lovell J.D."/>
            <person name="Lozado R."/>
            <person name="Lu J."/>
            <person name="Lyne R."/>
            <person name="Ma J."/>
            <person name="Maheshwari M."/>
            <person name="Matthews L.H."/>
            <person name="McDowall J."/>
            <person name="McLaren S."/>
            <person name="McMurray A."/>
            <person name="Meidl P."/>
            <person name="Meitinger T."/>
            <person name="Milne S."/>
            <person name="Miner G."/>
            <person name="Mistry S.L."/>
            <person name="Morgan M."/>
            <person name="Morris S."/>
            <person name="Mueller I."/>
            <person name="Mullikin J.C."/>
            <person name="Nguyen N."/>
            <person name="Nordsiek G."/>
            <person name="Nyakatura G."/>
            <person name="O'dell C.N."/>
            <person name="Okwuonu G."/>
            <person name="Palmer S."/>
            <person name="Pandian R."/>
            <person name="Parker D."/>
            <person name="Parrish J."/>
            <person name="Pasternak S."/>
            <person name="Patel D."/>
            <person name="Pearce A.V."/>
            <person name="Pearson D.M."/>
            <person name="Pelan S.E."/>
            <person name="Perez L."/>
            <person name="Porter K.M."/>
            <person name="Ramsey Y."/>
            <person name="Reichwald K."/>
            <person name="Rhodes S."/>
            <person name="Ridler K.A."/>
            <person name="Schlessinger D."/>
            <person name="Schueler M.G."/>
            <person name="Sehra H.K."/>
            <person name="Shaw-Smith C."/>
            <person name="Shen H."/>
            <person name="Sheridan E.M."/>
            <person name="Shownkeen R."/>
            <person name="Skuce C.D."/>
            <person name="Smith M.L."/>
            <person name="Sotheran E.C."/>
            <person name="Steingruber H.E."/>
            <person name="Steward C.A."/>
            <person name="Storey R."/>
            <person name="Swann R.M."/>
            <person name="Swarbreck D."/>
            <person name="Tabor P.E."/>
            <person name="Taudien S."/>
            <person name="Taylor T."/>
            <person name="Teague B."/>
            <person name="Thomas K."/>
            <person name="Thorpe A."/>
            <person name="Timms K."/>
            <person name="Tracey A."/>
            <person name="Trevanion S."/>
            <person name="Tromans A.C."/>
            <person name="d'Urso M."/>
            <person name="Verduzco D."/>
            <person name="Villasana D."/>
            <person name="Waldron L."/>
            <person name="Wall M."/>
            <person name="Wang Q."/>
            <person name="Warren J."/>
            <person name="Warry G.L."/>
            <person name="Wei X."/>
            <person name="West A."/>
            <person name="Whitehead S.L."/>
            <person name="Whiteley M.N."/>
            <person name="Wilkinson J.E."/>
            <person name="Willey D.L."/>
            <person name="Williams G."/>
            <person name="Williams L."/>
            <person name="Williamson A."/>
            <person name="Williamson H."/>
            <person name="Wilming L."/>
            <person name="Woodmansey R.L."/>
            <person name="Wray P.W."/>
            <person name="Yen J."/>
            <person name="Zhang J."/>
            <person name="Zhou J."/>
            <person name="Zoghbi H."/>
            <person name="Zorilla S."/>
            <person name="Buck D."/>
            <person name="Reinhardt R."/>
            <person name="Poustka A."/>
            <person name="Rosenthal A."/>
            <person name="Lehrach H."/>
            <person name="Meindl A."/>
            <person name="Minx P.J."/>
            <person name="Hillier L.W."/>
            <person name="Willard H.F."/>
            <person name="Wilson R.K."/>
            <person name="Waterston R.H."/>
            <person name="Rice C.M."/>
            <person name="Vaudin M."/>
            <person name="Coulson A."/>
            <person name="Nelson D.L."/>
            <person name="Weinstock G."/>
            <person name="Sulston J.E."/>
            <person name="Durbin R.M."/>
            <person name="Hubbard T."/>
            <person name="Gibbs R.A."/>
            <person name="Beck S."/>
            <person name="Rogers J."/>
            <person name="Bentley D.R."/>
        </authorList>
    </citation>
    <scope>NUCLEOTIDE SEQUENCE [LARGE SCALE GENOMIC DNA]</scope>
</reference>
<reference key="3">
    <citation type="journal article" date="1993" name="Mamm. Genome">
        <title>A novel X-linked member of the human zinc finger protein gene family: isolation, mapping, and expression.</title>
        <authorList>
            <person name="Marino M."/>
            <person name="Archidiacono N."/>
            <person name="Franze A."/>
            <person name="Rosati M."/>
            <person name="Rocchi M."/>
            <person name="Ballabio A."/>
            <person name="Grimaldi G."/>
        </authorList>
    </citation>
    <scope>NUCLEOTIDE SEQUENCE [GENOMIC DNA] OF 325-661</scope>
</reference>
<reference key="4">
    <citation type="journal article" date="2017" name="Nat. Struct. Mol. Biol.">
        <title>Site-specific mapping of the human SUMO proteome reveals co-modification with phosphorylation.</title>
        <authorList>
            <person name="Hendriks I.A."/>
            <person name="Lyon D."/>
            <person name="Young C."/>
            <person name="Jensen L.J."/>
            <person name="Vertegaal A.C."/>
            <person name="Nielsen M.L."/>
        </authorList>
    </citation>
    <scope>SUMOYLATION [LARGE SCALE ANALYSIS] AT LYS-266</scope>
    <scope>IDENTIFICATION BY MASS SPECTROMETRY [LARGE SCALE ANALYSIS]</scope>
</reference>
<name>ZNF81_HUMAN</name>